<organism>
    <name type="scientific">Pseudoalteromonas atlantica (strain T6c / ATCC BAA-1087)</name>
    <dbReference type="NCBI Taxonomy" id="3042615"/>
    <lineage>
        <taxon>Bacteria</taxon>
        <taxon>Pseudomonadati</taxon>
        <taxon>Pseudomonadota</taxon>
        <taxon>Gammaproteobacteria</taxon>
        <taxon>Alteromonadales</taxon>
        <taxon>Alteromonadaceae</taxon>
        <taxon>Paraglaciecola</taxon>
    </lineage>
</organism>
<evidence type="ECO:0000255" key="1">
    <source>
        <dbReference type="HAMAP-Rule" id="MF_00195"/>
    </source>
</evidence>
<gene>
    <name evidence="1" type="primary">der</name>
    <name type="synonym">engA</name>
    <name type="ordered locus">Patl_3122</name>
</gene>
<sequence length="482" mass="53714">MLPVVALVGRPNVGKSTLFNRLTRTRDALVADFPGLTRDRKYGQANYEGLQFIVVDTGGISGDEQGIDMAMANQSLMAIDEADVVLFLVDARAGLTAADQGIAEHLRKQNKSVYVVANKVDGIDGDSESADFFALGLGDVNQIAAAHGRGVTQLLTHTLMPLSEQFPDMQVPEDEEADEEIDAEKQLEKLLASPIKLAIVGKPNVGKSTLTNRILGEERVVVYDQPGTTRDSIFIPMERDDREYVLIDTAGVRRRRSISEAVEKFSIVKTLQAIEEANVVLLVIDAQEGVTDQDLSLLGFVLNSGRSLVVAVNKWDGLAKDVKDEIKRELDRRLGFIDFARLHYISALHGTNVGHLFESVQEAYNSATKRINTSMLTRIMDMAQADHQPPVVRGRRVKMKYAHAGGYNPPIIVIHGNQVKDLPDSYKRYMMNYFRKSLKVMGTPIKVEFREGANPFESNTNTMTDSQRRKRKMLMRMHKNNK</sequence>
<accession>Q15R60</accession>
<comment type="function">
    <text evidence="1">GTPase that plays an essential role in the late steps of ribosome biogenesis.</text>
</comment>
<comment type="subunit">
    <text evidence="1">Associates with the 50S ribosomal subunit.</text>
</comment>
<comment type="similarity">
    <text evidence="1">Belongs to the TRAFAC class TrmE-Era-EngA-EngB-Septin-like GTPase superfamily. EngA (Der) GTPase family.</text>
</comment>
<reference key="1">
    <citation type="submission" date="2006-06" db="EMBL/GenBank/DDBJ databases">
        <title>Complete sequence of Pseudoalteromonas atlantica T6c.</title>
        <authorList>
            <consortium name="US DOE Joint Genome Institute"/>
            <person name="Copeland A."/>
            <person name="Lucas S."/>
            <person name="Lapidus A."/>
            <person name="Barry K."/>
            <person name="Detter J.C."/>
            <person name="Glavina del Rio T."/>
            <person name="Hammon N."/>
            <person name="Israni S."/>
            <person name="Dalin E."/>
            <person name="Tice H."/>
            <person name="Pitluck S."/>
            <person name="Saunders E."/>
            <person name="Brettin T."/>
            <person name="Bruce D."/>
            <person name="Han C."/>
            <person name="Tapia R."/>
            <person name="Gilna P."/>
            <person name="Schmutz J."/>
            <person name="Larimer F."/>
            <person name="Land M."/>
            <person name="Hauser L."/>
            <person name="Kyrpides N."/>
            <person name="Kim E."/>
            <person name="Karls A.C."/>
            <person name="Bartlett D."/>
            <person name="Higgins B.P."/>
            <person name="Richardson P."/>
        </authorList>
    </citation>
    <scope>NUCLEOTIDE SEQUENCE [LARGE SCALE GENOMIC DNA]</scope>
    <source>
        <strain>T6c / ATCC BAA-1087</strain>
    </source>
</reference>
<dbReference type="EMBL" id="CP000388">
    <property type="protein sequence ID" value="ABG41628.1"/>
    <property type="molecule type" value="Genomic_DNA"/>
</dbReference>
<dbReference type="RefSeq" id="WP_011575866.1">
    <property type="nucleotide sequence ID" value="NC_008228.1"/>
</dbReference>
<dbReference type="SMR" id="Q15R60"/>
<dbReference type="STRING" id="342610.Patl_3122"/>
<dbReference type="KEGG" id="pat:Patl_3122"/>
<dbReference type="eggNOG" id="COG1160">
    <property type="taxonomic scope" value="Bacteria"/>
</dbReference>
<dbReference type="HOGENOM" id="CLU_016077_5_1_6"/>
<dbReference type="OrthoDB" id="9805918at2"/>
<dbReference type="Proteomes" id="UP000001981">
    <property type="component" value="Chromosome"/>
</dbReference>
<dbReference type="GO" id="GO:0016887">
    <property type="term" value="F:ATP hydrolysis activity"/>
    <property type="evidence" value="ECO:0007669"/>
    <property type="project" value="InterPro"/>
</dbReference>
<dbReference type="GO" id="GO:0005525">
    <property type="term" value="F:GTP binding"/>
    <property type="evidence" value="ECO:0007669"/>
    <property type="project" value="UniProtKB-UniRule"/>
</dbReference>
<dbReference type="GO" id="GO:0043022">
    <property type="term" value="F:ribosome binding"/>
    <property type="evidence" value="ECO:0007669"/>
    <property type="project" value="TreeGrafter"/>
</dbReference>
<dbReference type="GO" id="GO:0042254">
    <property type="term" value="P:ribosome biogenesis"/>
    <property type="evidence" value="ECO:0007669"/>
    <property type="project" value="UniProtKB-KW"/>
</dbReference>
<dbReference type="CDD" id="cd01894">
    <property type="entry name" value="EngA1"/>
    <property type="match status" value="1"/>
</dbReference>
<dbReference type="CDD" id="cd01895">
    <property type="entry name" value="EngA2"/>
    <property type="match status" value="1"/>
</dbReference>
<dbReference type="FunFam" id="3.30.300.20:FF:000004">
    <property type="entry name" value="GTPase Der"/>
    <property type="match status" value="1"/>
</dbReference>
<dbReference type="FunFam" id="3.40.50.300:FF:000040">
    <property type="entry name" value="GTPase Der"/>
    <property type="match status" value="1"/>
</dbReference>
<dbReference type="FunFam" id="3.40.50.300:FF:000057">
    <property type="entry name" value="GTPase Der"/>
    <property type="match status" value="1"/>
</dbReference>
<dbReference type="Gene3D" id="3.30.300.20">
    <property type="match status" value="1"/>
</dbReference>
<dbReference type="Gene3D" id="3.40.50.300">
    <property type="entry name" value="P-loop containing nucleotide triphosphate hydrolases"/>
    <property type="match status" value="2"/>
</dbReference>
<dbReference type="HAMAP" id="MF_00195">
    <property type="entry name" value="GTPase_Der"/>
    <property type="match status" value="1"/>
</dbReference>
<dbReference type="InterPro" id="IPR003593">
    <property type="entry name" value="AAA+_ATPase"/>
</dbReference>
<dbReference type="InterPro" id="IPR031166">
    <property type="entry name" value="G_ENGA"/>
</dbReference>
<dbReference type="InterPro" id="IPR006073">
    <property type="entry name" value="GTP-bd"/>
</dbReference>
<dbReference type="InterPro" id="IPR016484">
    <property type="entry name" value="GTPase_Der"/>
</dbReference>
<dbReference type="InterPro" id="IPR032859">
    <property type="entry name" value="KH_dom-like"/>
</dbReference>
<dbReference type="InterPro" id="IPR015946">
    <property type="entry name" value="KH_dom-like_a/b"/>
</dbReference>
<dbReference type="InterPro" id="IPR027417">
    <property type="entry name" value="P-loop_NTPase"/>
</dbReference>
<dbReference type="InterPro" id="IPR005225">
    <property type="entry name" value="Small_GTP-bd"/>
</dbReference>
<dbReference type="NCBIfam" id="TIGR03594">
    <property type="entry name" value="GTPase_EngA"/>
    <property type="match status" value="1"/>
</dbReference>
<dbReference type="NCBIfam" id="TIGR00231">
    <property type="entry name" value="small_GTP"/>
    <property type="match status" value="2"/>
</dbReference>
<dbReference type="PANTHER" id="PTHR43834">
    <property type="entry name" value="GTPASE DER"/>
    <property type="match status" value="1"/>
</dbReference>
<dbReference type="PANTHER" id="PTHR43834:SF6">
    <property type="entry name" value="GTPASE DER"/>
    <property type="match status" value="1"/>
</dbReference>
<dbReference type="Pfam" id="PF14714">
    <property type="entry name" value="KH_dom-like"/>
    <property type="match status" value="1"/>
</dbReference>
<dbReference type="Pfam" id="PF01926">
    <property type="entry name" value="MMR_HSR1"/>
    <property type="match status" value="2"/>
</dbReference>
<dbReference type="PIRSF" id="PIRSF006485">
    <property type="entry name" value="GTP-binding_EngA"/>
    <property type="match status" value="1"/>
</dbReference>
<dbReference type="PRINTS" id="PR00326">
    <property type="entry name" value="GTP1OBG"/>
</dbReference>
<dbReference type="SMART" id="SM00382">
    <property type="entry name" value="AAA"/>
    <property type="match status" value="2"/>
</dbReference>
<dbReference type="SUPFAM" id="SSF52540">
    <property type="entry name" value="P-loop containing nucleoside triphosphate hydrolases"/>
    <property type="match status" value="2"/>
</dbReference>
<dbReference type="PROSITE" id="PS51712">
    <property type="entry name" value="G_ENGA"/>
    <property type="match status" value="2"/>
</dbReference>
<proteinExistence type="inferred from homology"/>
<keyword id="KW-0342">GTP-binding</keyword>
<keyword id="KW-0547">Nucleotide-binding</keyword>
<keyword id="KW-0677">Repeat</keyword>
<keyword id="KW-0690">Ribosome biogenesis</keyword>
<feature type="chain" id="PRO_1000011697" description="GTPase Der">
    <location>
        <begin position="1"/>
        <end position="482"/>
    </location>
</feature>
<feature type="domain" description="EngA-type G 1">
    <location>
        <begin position="3"/>
        <end position="166"/>
    </location>
</feature>
<feature type="domain" description="EngA-type G 2">
    <location>
        <begin position="195"/>
        <end position="368"/>
    </location>
</feature>
<feature type="domain" description="KH-like" evidence="1">
    <location>
        <begin position="369"/>
        <end position="453"/>
    </location>
</feature>
<feature type="binding site" evidence="1">
    <location>
        <begin position="9"/>
        <end position="16"/>
    </location>
    <ligand>
        <name>GTP</name>
        <dbReference type="ChEBI" id="CHEBI:37565"/>
        <label>1</label>
    </ligand>
</feature>
<feature type="binding site" evidence="1">
    <location>
        <begin position="56"/>
        <end position="60"/>
    </location>
    <ligand>
        <name>GTP</name>
        <dbReference type="ChEBI" id="CHEBI:37565"/>
        <label>1</label>
    </ligand>
</feature>
<feature type="binding site" evidence="1">
    <location>
        <begin position="118"/>
        <end position="121"/>
    </location>
    <ligand>
        <name>GTP</name>
        <dbReference type="ChEBI" id="CHEBI:37565"/>
        <label>1</label>
    </ligand>
</feature>
<feature type="binding site" evidence="1">
    <location>
        <begin position="201"/>
        <end position="208"/>
    </location>
    <ligand>
        <name>GTP</name>
        <dbReference type="ChEBI" id="CHEBI:37565"/>
        <label>2</label>
    </ligand>
</feature>
<feature type="binding site" evidence="1">
    <location>
        <begin position="248"/>
        <end position="252"/>
    </location>
    <ligand>
        <name>GTP</name>
        <dbReference type="ChEBI" id="CHEBI:37565"/>
        <label>2</label>
    </ligand>
</feature>
<feature type="binding site" evidence="1">
    <location>
        <begin position="313"/>
        <end position="316"/>
    </location>
    <ligand>
        <name>GTP</name>
        <dbReference type="ChEBI" id="CHEBI:37565"/>
        <label>2</label>
    </ligand>
</feature>
<protein>
    <recommendedName>
        <fullName evidence="1">GTPase Der</fullName>
    </recommendedName>
    <alternativeName>
        <fullName evidence="1">GTP-binding protein EngA</fullName>
    </alternativeName>
</protein>
<name>DER_PSEA6</name>